<reference key="1">
    <citation type="submission" date="2006-12" db="EMBL/GenBank/DDBJ databases">
        <title>Complete sequence of Chlorobium phaeobacteroides DSM 266.</title>
        <authorList>
            <consortium name="US DOE Joint Genome Institute"/>
            <person name="Copeland A."/>
            <person name="Lucas S."/>
            <person name="Lapidus A."/>
            <person name="Barry K."/>
            <person name="Detter J.C."/>
            <person name="Glavina del Rio T."/>
            <person name="Hammon N."/>
            <person name="Israni S."/>
            <person name="Pitluck S."/>
            <person name="Goltsman E."/>
            <person name="Schmutz J."/>
            <person name="Larimer F."/>
            <person name="Land M."/>
            <person name="Hauser L."/>
            <person name="Mikhailova N."/>
            <person name="Li T."/>
            <person name="Overmann J."/>
            <person name="Bryant D.A."/>
            <person name="Richardson P."/>
        </authorList>
    </citation>
    <scope>NUCLEOTIDE SEQUENCE [LARGE SCALE GENOMIC DNA]</scope>
    <source>
        <strain>DSM 266 / SMG 266 / 2430</strain>
    </source>
</reference>
<feature type="chain" id="PRO_1000046164" description="Large ribosomal subunit protein uL11">
    <location>
        <begin position="1"/>
        <end position="141"/>
    </location>
</feature>
<dbReference type="EMBL" id="CP000492">
    <property type="protein sequence ID" value="ABL64296.1"/>
    <property type="molecule type" value="Genomic_DNA"/>
</dbReference>
<dbReference type="RefSeq" id="WP_011744136.1">
    <property type="nucleotide sequence ID" value="NC_008639.1"/>
</dbReference>
<dbReference type="SMR" id="A1BD19"/>
<dbReference type="STRING" id="290317.Cpha266_0229"/>
<dbReference type="KEGG" id="cph:Cpha266_0229"/>
<dbReference type="eggNOG" id="COG0080">
    <property type="taxonomic scope" value="Bacteria"/>
</dbReference>
<dbReference type="HOGENOM" id="CLU_074237_2_1_10"/>
<dbReference type="OrthoDB" id="9802408at2"/>
<dbReference type="Proteomes" id="UP000008701">
    <property type="component" value="Chromosome"/>
</dbReference>
<dbReference type="GO" id="GO:0022625">
    <property type="term" value="C:cytosolic large ribosomal subunit"/>
    <property type="evidence" value="ECO:0007669"/>
    <property type="project" value="TreeGrafter"/>
</dbReference>
<dbReference type="GO" id="GO:0070180">
    <property type="term" value="F:large ribosomal subunit rRNA binding"/>
    <property type="evidence" value="ECO:0007669"/>
    <property type="project" value="UniProtKB-UniRule"/>
</dbReference>
<dbReference type="GO" id="GO:0003735">
    <property type="term" value="F:structural constituent of ribosome"/>
    <property type="evidence" value="ECO:0007669"/>
    <property type="project" value="InterPro"/>
</dbReference>
<dbReference type="GO" id="GO:0006412">
    <property type="term" value="P:translation"/>
    <property type="evidence" value="ECO:0007669"/>
    <property type="project" value="UniProtKB-UniRule"/>
</dbReference>
<dbReference type="CDD" id="cd00349">
    <property type="entry name" value="Ribosomal_L11"/>
    <property type="match status" value="1"/>
</dbReference>
<dbReference type="FunFam" id="1.10.10.250:FF:000001">
    <property type="entry name" value="50S ribosomal protein L11"/>
    <property type="match status" value="1"/>
</dbReference>
<dbReference type="FunFam" id="3.30.1550.10:FF:000001">
    <property type="entry name" value="50S ribosomal protein L11"/>
    <property type="match status" value="1"/>
</dbReference>
<dbReference type="Gene3D" id="1.10.10.250">
    <property type="entry name" value="Ribosomal protein L11, C-terminal domain"/>
    <property type="match status" value="1"/>
</dbReference>
<dbReference type="Gene3D" id="3.30.1550.10">
    <property type="entry name" value="Ribosomal protein L11/L12, N-terminal domain"/>
    <property type="match status" value="1"/>
</dbReference>
<dbReference type="HAMAP" id="MF_00736">
    <property type="entry name" value="Ribosomal_uL11"/>
    <property type="match status" value="1"/>
</dbReference>
<dbReference type="InterPro" id="IPR000911">
    <property type="entry name" value="Ribosomal_uL11"/>
</dbReference>
<dbReference type="InterPro" id="IPR006519">
    <property type="entry name" value="Ribosomal_uL11_bac-typ"/>
</dbReference>
<dbReference type="InterPro" id="IPR020783">
    <property type="entry name" value="Ribosomal_uL11_C"/>
</dbReference>
<dbReference type="InterPro" id="IPR036769">
    <property type="entry name" value="Ribosomal_uL11_C_sf"/>
</dbReference>
<dbReference type="InterPro" id="IPR020784">
    <property type="entry name" value="Ribosomal_uL11_N"/>
</dbReference>
<dbReference type="InterPro" id="IPR036796">
    <property type="entry name" value="Ribosomal_uL11_N_sf"/>
</dbReference>
<dbReference type="NCBIfam" id="TIGR01632">
    <property type="entry name" value="L11_bact"/>
    <property type="match status" value="1"/>
</dbReference>
<dbReference type="PANTHER" id="PTHR11661">
    <property type="entry name" value="60S RIBOSOMAL PROTEIN L12"/>
    <property type="match status" value="1"/>
</dbReference>
<dbReference type="PANTHER" id="PTHR11661:SF1">
    <property type="entry name" value="LARGE RIBOSOMAL SUBUNIT PROTEIN UL11M"/>
    <property type="match status" value="1"/>
</dbReference>
<dbReference type="Pfam" id="PF00298">
    <property type="entry name" value="Ribosomal_L11"/>
    <property type="match status" value="1"/>
</dbReference>
<dbReference type="Pfam" id="PF03946">
    <property type="entry name" value="Ribosomal_L11_N"/>
    <property type="match status" value="1"/>
</dbReference>
<dbReference type="SMART" id="SM00649">
    <property type="entry name" value="RL11"/>
    <property type="match status" value="1"/>
</dbReference>
<dbReference type="SUPFAM" id="SSF54747">
    <property type="entry name" value="Ribosomal L11/L12e N-terminal domain"/>
    <property type="match status" value="1"/>
</dbReference>
<dbReference type="SUPFAM" id="SSF46906">
    <property type="entry name" value="Ribosomal protein L11, C-terminal domain"/>
    <property type="match status" value="1"/>
</dbReference>
<proteinExistence type="inferred from homology"/>
<keyword id="KW-0488">Methylation</keyword>
<keyword id="KW-1185">Reference proteome</keyword>
<keyword id="KW-0687">Ribonucleoprotein</keyword>
<keyword id="KW-0689">Ribosomal protein</keyword>
<keyword id="KW-0694">RNA-binding</keyword>
<keyword id="KW-0699">rRNA-binding</keyword>
<protein>
    <recommendedName>
        <fullName evidence="1">Large ribosomal subunit protein uL11</fullName>
    </recommendedName>
    <alternativeName>
        <fullName evidence="2">50S ribosomal protein L11</fullName>
    </alternativeName>
</protein>
<sequence>MAKKIIGFIKLQIPAGAANPAPPVGPALGQKGVNIMEFCKQFNAKTQAEAGMITPVVITVYSDKSFTFITKTPPAAVLLLKEAQLKKGSGEPNRNKVGTVSREQVRRIAELKMPDLNAVDVAGAEQMVMGTARSMGIVVEN</sequence>
<gene>
    <name evidence="1" type="primary">rplK</name>
    <name type="ordered locus">Cpha266_0229</name>
</gene>
<evidence type="ECO:0000255" key="1">
    <source>
        <dbReference type="HAMAP-Rule" id="MF_00736"/>
    </source>
</evidence>
<evidence type="ECO:0000305" key="2"/>
<accession>A1BD19</accession>
<name>RL11_CHLPD</name>
<comment type="function">
    <text evidence="1">Forms part of the ribosomal stalk which helps the ribosome interact with GTP-bound translation factors.</text>
</comment>
<comment type="subunit">
    <text evidence="1">Part of the ribosomal stalk of the 50S ribosomal subunit. Interacts with L10 and the large rRNA to form the base of the stalk. L10 forms an elongated spine to which L12 dimers bind in a sequential fashion forming a multimeric L10(L12)X complex.</text>
</comment>
<comment type="PTM">
    <text evidence="1">One or more lysine residues are methylated.</text>
</comment>
<comment type="similarity">
    <text evidence="1">Belongs to the universal ribosomal protein uL11 family.</text>
</comment>
<organism>
    <name type="scientific">Chlorobium phaeobacteroides (strain DSM 266 / SMG 266 / 2430)</name>
    <dbReference type="NCBI Taxonomy" id="290317"/>
    <lineage>
        <taxon>Bacteria</taxon>
        <taxon>Pseudomonadati</taxon>
        <taxon>Chlorobiota</taxon>
        <taxon>Chlorobiia</taxon>
        <taxon>Chlorobiales</taxon>
        <taxon>Chlorobiaceae</taxon>
        <taxon>Chlorobium/Pelodictyon group</taxon>
        <taxon>Chlorobium</taxon>
    </lineage>
</organism>